<comment type="function">
    <text evidence="1 2 4 6">Catalyzes the first and rate-limiting reaction of the four reactions that constitute the long-chain fatty acids elongation cycle. This endoplasmic reticulum-bound enzymatic process allows the addition of 2 carbons to the chain of long- and very long-chain fatty acids (VLCFAs) per cycle. Condensing enzyme that acts specifically toward polyunsaturated acyl-CoA with the higher activity toward C18:3(n-6) acyl-CoA. May participate in the production of monounsaturated and of polyunsaturated VLCFAs of different chain lengths that are involved in multiple biological processes as precursors of membrane lipids and lipid mediators (By similarity) (PubMed:10970790, PubMed:20937905). In conditions where the essential linoleic and alpha linoleic fatty acids are lacking it is also involved in the synthesis of Mead acid from oleic acid (By similarity).</text>
</comment>
<comment type="catalytic activity">
    <reaction evidence="2 4 5 6">
        <text>a very-long-chain acyl-CoA + malonyl-CoA + H(+) = a very-long-chain 3-oxoacyl-CoA + CO2 + CoA</text>
        <dbReference type="Rhea" id="RHEA:32727"/>
        <dbReference type="ChEBI" id="CHEBI:15378"/>
        <dbReference type="ChEBI" id="CHEBI:16526"/>
        <dbReference type="ChEBI" id="CHEBI:57287"/>
        <dbReference type="ChEBI" id="CHEBI:57384"/>
        <dbReference type="ChEBI" id="CHEBI:90725"/>
        <dbReference type="ChEBI" id="CHEBI:90736"/>
        <dbReference type="EC" id="2.3.1.199"/>
    </reaction>
    <physiologicalReaction direction="left-to-right" evidence="12">
        <dbReference type="Rhea" id="RHEA:32728"/>
    </physiologicalReaction>
</comment>
<comment type="catalytic activity">
    <reaction evidence="4 6">
        <text>(6Z,9Z,12Z)-octadecatrienoyl-CoA + malonyl-CoA + H(+) = (8Z,11Z,14Z)-3-oxoeicosatrienoyl-CoA + CO2 + CoA</text>
        <dbReference type="Rhea" id="RHEA:35379"/>
        <dbReference type="ChEBI" id="CHEBI:15378"/>
        <dbReference type="ChEBI" id="CHEBI:16526"/>
        <dbReference type="ChEBI" id="CHEBI:57287"/>
        <dbReference type="ChEBI" id="CHEBI:57363"/>
        <dbReference type="ChEBI" id="CHEBI:57384"/>
        <dbReference type="ChEBI" id="CHEBI:71481"/>
    </reaction>
    <physiologicalReaction direction="left-to-right" evidence="12">
        <dbReference type="Rhea" id="RHEA:35380"/>
    </physiologicalReaction>
</comment>
<comment type="catalytic activity">
    <reaction evidence="4 6">
        <text>(9Z,12Z,15Z)-octadecatrienoyl-CoA + malonyl-CoA + H(+) = (11Z,14Z,17Z)-3-oxoeicosatrienoyl-CoA + CO2 + CoA</text>
        <dbReference type="Rhea" id="RHEA:36523"/>
        <dbReference type="ChEBI" id="CHEBI:15378"/>
        <dbReference type="ChEBI" id="CHEBI:16526"/>
        <dbReference type="ChEBI" id="CHEBI:57287"/>
        <dbReference type="ChEBI" id="CHEBI:57384"/>
        <dbReference type="ChEBI" id="CHEBI:74034"/>
        <dbReference type="ChEBI" id="CHEBI:74054"/>
    </reaction>
    <physiologicalReaction direction="left-to-right" evidence="12">
        <dbReference type="Rhea" id="RHEA:36524"/>
    </physiologicalReaction>
</comment>
<comment type="catalytic activity">
    <reaction evidence="4">
        <text>(9Z)-hexadecenoyl-CoA + malonyl-CoA + H(+) = 3-oxo-(11Z)-octadecenoyl-CoA + CO2 + CoA</text>
        <dbReference type="Rhea" id="RHEA:39675"/>
        <dbReference type="ChEBI" id="CHEBI:15378"/>
        <dbReference type="ChEBI" id="CHEBI:16526"/>
        <dbReference type="ChEBI" id="CHEBI:57287"/>
        <dbReference type="ChEBI" id="CHEBI:57384"/>
        <dbReference type="ChEBI" id="CHEBI:61540"/>
        <dbReference type="ChEBI" id="CHEBI:76555"/>
    </reaction>
    <physiologicalReaction direction="left-to-right" evidence="12">
        <dbReference type="Rhea" id="RHEA:39676"/>
    </physiologicalReaction>
</comment>
<comment type="catalytic activity">
    <reaction evidence="4">
        <text>(9Z)-octadecenoyl-CoA + malonyl-CoA + H(+) = 3-oxo-(11Z)-eicosenoyl-CoA + CO2 + CoA</text>
        <dbReference type="Rhea" id="RHEA:36511"/>
        <dbReference type="ChEBI" id="CHEBI:15378"/>
        <dbReference type="ChEBI" id="CHEBI:16526"/>
        <dbReference type="ChEBI" id="CHEBI:57287"/>
        <dbReference type="ChEBI" id="CHEBI:57384"/>
        <dbReference type="ChEBI" id="CHEBI:57387"/>
        <dbReference type="ChEBI" id="CHEBI:74011"/>
    </reaction>
    <physiologicalReaction direction="left-to-right" evidence="12">
        <dbReference type="Rhea" id="RHEA:36512"/>
    </physiologicalReaction>
</comment>
<comment type="catalytic activity">
    <reaction evidence="4">
        <text>(11Z)-octadecenoyl-CoA + malonyl-CoA + H(+) = 3-oxo-(13Z)-eicosenoyl-CoA + CO2 + CoA</text>
        <dbReference type="Rhea" id="RHEA:39679"/>
        <dbReference type="ChEBI" id="CHEBI:15378"/>
        <dbReference type="ChEBI" id="CHEBI:16526"/>
        <dbReference type="ChEBI" id="CHEBI:57287"/>
        <dbReference type="ChEBI" id="CHEBI:57384"/>
        <dbReference type="ChEBI" id="CHEBI:75121"/>
        <dbReference type="ChEBI" id="CHEBI:76559"/>
    </reaction>
    <physiologicalReaction direction="left-to-right" evidence="12">
        <dbReference type="Rhea" id="RHEA:39680"/>
    </physiologicalReaction>
</comment>
<comment type="catalytic activity">
    <reaction evidence="6">
        <text>(9Z,12Z)-octadecadienoyl-CoA + malonyl-CoA + H(+) = (11Z,14Z)-3-oxoicosa-11,14-dienoyl-CoA + CO2 + CoA</text>
        <dbReference type="Rhea" id="RHEA:36503"/>
        <dbReference type="ChEBI" id="CHEBI:15378"/>
        <dbReference type="ChEBI" id="CHEBI:16526"/>
        <dbReference type="ChEBI" id="CHEBI:57287"/>
        <dbReference type="ChEBI" id="CHEBI:57383"/>
        <dbReference type="ChEBI" id="CHEBI:57384"/>
        <dbReference type="ChEBI" id="CHEBI:74012"/>
    </reaction>
    <physiologicalReaction direction="left-to-right" evidence="13">
        <dbReference type="Rhea" id="RHEA:36504"/>
    </physiologicalReaction>
</comment>
<comment type="catalytic activity">
    <reaction evidence="4">
        <text>(6Z,9Z,12Z,15Z)-octadecatetraenoyl-CoA + malonyl-CoA + H(+) = (8Z,11Z,14Z,17Z)-3-oxoicosatetraenoyl-CoA + CO2 + CoA</text>
        <dbReference type="Rhea" id="RHEA:35391"/>
        <dbReference type="ChEBI" id="CHEBI:15378"/>
        <dbReference type="ChEBI" id="CHEBI:16526"/>
        <dbReference type="ChEBI" id="CHEBI:57287"/>
        <dbReference type="ChEBI" id="CHEBI:57384"/>
        <dbReference type="ChEBI" id="CHEBI:71489"/>
        <dbReference type="ChEBI" id="CHEBI:71491"/>
    </reaction>
    <physiologicalReaction direction="left-to-right" evidence="12">
        <dbReference type="Rhea" id="RHEA:35392"/>
    </physiologicalReaction>
</comment>
<comment type="catalytic activity">
    <reaction evidence="4 5 6">
        <text>(5Z,8Z,11Z,14Z)-eicosatetraenoyl-CoA + malonyl-CoA + H(+) = (7Z,10Z,13Z,16Z)-3-oxodocosatetraenoyl-CoA + CO2 + CoA</text>
        <dbReference type="Rhea" id="RHEA:36475"/>
        <dbReference type="ChEBI" id="CHEBI:15378"/>
        <dbReference type="ChEBI" id="CHEBI:16526"/>
        <dbReference type="ChEBI" id="CHEBI:57287"/>
        <dbReference type="ChEBI" id="CHEBI:57368"/>
        <dbReference type="ChEBI" id="CHEBI:57384"/>
        <dbReference type="ChEBI" id="CHEBI:73852"/>
    </reaction>
    <physiologicalReaction direction="left-to-right" evidence="12">
        <dbReference type="Rhea" id="RHEA:36476"/>
    </physiologicalReaction>
</comment>
<comment type="catalytic activity">
    <reaction evidence="4">
        <text>(5Z,8Z,11Z,14Z,17Z)-eicosapentaenoyl-CoA + malonyl-CoA + H(+) = 3-oxo-(7Z,10Z,13Z,16Z,19Z)-docosapentaenoyl-CoA + CO2 + CoA</text>
        <dbReference type="Rhea" id="RHEA:36483"/>
        <dbReference type="ChEBI" id="CHEBI:15378"/>
        <dbReference type="ChEBI" id="CHEBI:16526"/>
        <dbReference type="ChEBI" id="CHEBI:57287"/>
        <dbReference type="ChEBI" id="CHEBI:57384"/>
        <dbReference type="ChEBI" id="CHEBI:73862"/>
        <dbReference type="ChEBI" id="CHEBI:73863"/>
    </reaction>
    <physiologicalReaction direction="left-to-right" evidence="12">
        <dbReference type="Rhea" id="RHEA:36484"/>
    </physiologicalReaction>
</comment>
<comment type="pathway">
    <text evidence="2 6">Lipid metabolism; polyunsaturated fatty acid biosynthesis.</text>
</comment>
<comment type="subunit">
    <text evidence="8">Interacts with TECR.</text>
</comment>
<comment type="interaction">
    <interactant intactId="EBI-11037623">
        <id>Q9NYP7</id>
    </interactant>
    <interactant intactId="EBI-12822627">
        <id>O14523</id>
        <label>C2CD2L</label>
    </interactant>
    <organismsDiffer>false</organismsDiffer>
    <experiments>3</experiments>
</comment>
<comment type="interaction">
    <interactant intactId="EBI-11037623">
        <id>Q9NYP7</id>
    </interactant>
    <interactant intactId="EBI-4401517">
        <id>O14653</id>
        <label>GOSR2</label>
    </interactant>
    <organismsDiffer>false</organismsDiffer>
    <experiments>3</experiments>
</comment>
<comment type="interaction">
    <interactant intactId="EBI-11037623">
        <id>Q9NYP7</id>
    </interactant>
    <interactant intactId="EBI-2806151">
        <id>P09601</id>
        <label>HMOX1</label>
    </interactant>
    <organismsDiffer>false</organismsDiffer>
    <experiments>3</experiments>
</comment>
<comment type="interaction">
    <interactant intactId="EBI-11037623">
        <id>Q9NYP7</id>
    </interactant>
    <interactant intactId="EBI-712096">
        <id>P30519</id>
        <label>HMOX2</label>
    </interactant>
    <organismsDiffer>false</organismsDiffer>
    <experiments>3</experiments>
</comment>
<comment type="interaction">
    <interactant intactId="EBI-11037623">
        <id>Q9NYP7</id>
    </interactant>
    <interactant intactId="EBI-720480">
        <id>P24593</id>
        <label>IGFBP5</label>
    </interactant>
    <organismsDiffer>false</organismsDiffer>
    <experiments>3</experiments>
</comment>
<comment type="interaction">
    <interactant intactId="EBI-11037623">
        <id>Q9NYP7</id>
    </interactant>
    <interactant intactId="EBI-10317425">
        <id>Q9NZG7</id>
        <label>NINJ2</label>
    </interactant>
    <organismsDiffer>false</organismsDiffer>
    <experiments>3</experiments>
</comment>
<comment type="interaction">
    <interactant intactId="EBI-11037623">
        <id>Q9NYP7</id>
    </interactant>
    <interactant intactId="EBI-608347">
        <id>Q04941</id>
        <label>PLP2</label>
    </interactant>
    <organismsDiffer>false</organismsDiffer>
    <experiments>3</experiments>
</comment>
<comment type="interaction">
    <interactant intactId="EBI-11037623">
        <id>Q9NYP7</id>
    </interactant>
    <interactant intactId="EBI-2823239">
        <id>Q9NUM3</id>
        <label>SLC39A9</label>
    </interactant>
    <organismsDiffer>false</organismsDiffer>
    <experiments>3</experiments>
</comment>
<comment type="interaction">
    <interactant intactId="EBI-11037623">
        <id>Q9NYP7</id>
    </interactant>
    <interactant intactId="EBI-3221827">
        <id>O15400</id>
        <label>STX7</label>
    </interactant>
    <organismsDiffer>false</organismsDiffer>
    <experiments>3</experiments>
</comment>
<comment type="interaction">
    <interactant intactId="EBI-11037623">
        <id>Q9NYP7</id>
    </interactant>
    <interactant intactId="EBI-1049004">
        <id>P57105</id>
        <label>SYNJ2BP</label>
    </interactant>
    <organismsDiffer>false</organismsDiffer>
    <experiments>3</experiments>
</comment>
<comment type="interaction">
    <interactant intactId="EBI-11037623">
        <id>Q9NYP7</id>
    </interactant>
    <interactant intactId="EBI-13075176">
        <id>Q8N2H4</id>
        <label>SYS1</label>
    </interactant>
    <organismsDiffer>false</organismsDiffer>
    <experiments>3</experiments>
</comment>
<comment type="interaction">
    <interactant intactId="EBI-11037623">
        <id>Q9NYP7</id>
    </interactant>
    <interactant intactId="EBI-310962">
        <id>Q9UPZ6</id>
        <label>THSD7A</label>
    </interactant>
    <organismsDiffer>false</organismsDiffer>
    <experiments>3</experiments>
</comment>
<comment type="interaction">
    <interactant intactId="EBI-11037623">
        <id>Q9NYP7</id>
    </interactant>
    <interactant intactId="EBI-12887458">
        <id>Q9BU79</id>
        <label>TMEM243</label>
    </interactant>
    <organismsDiffer>false</organismsDiffer>
    <experiments>3</experiments>
</comment>
<comment type="interaction">
    <interactant intactId="EBI-11037623">
        <id>Q9NYP7</id>
    </interactant>
    <interactant intactId="EBI-12003468">
        <id>A0AVG3</id>
        <label>TSNARE1</label>
    </interactant>
    <organismsDiffer>false</organismsDiffer>
    <experiments>3</experiments>
</comment>
<comment type="subcellular location">
    <subcellularLocation>
        <location evidence="2 6">Endoplasmic reticulum membrane</location>
        <topology evidence="2">Multi-pass membrane protein</topology>
    </subcellularLocation>
    <subcellularLocation>
        <location evidence="2 7">Cell projection</location>
        <location evidence="2 7">Dendrite</location>
    </subcellularLocation>
    <text evidence="2 7">In Purkinje cells, the protein localizes to the soma and proximal portion of the dendritic tree.</text>
</comment>
<comment type="alternative products">
    <event type="alternative splicing"/>
    <isoform>
        <id>Q9NYP7-1</id>
        <name>1</name>
        <sequence type="displayed"/>
    </isoform>
    <isoform>
        <id>Q9NYP7-2</id>
        <name>2</name>
        <sequence type="described" ref="VSP_045918"/>
    </isoform>
    <isoform>
        <id>Q9NYP7-3</id>
        <name>3</name>
        <sequence type="described" ref="VSP_045917 VSP_045919"/>
    </isoform>
</comment>
<comment type="tissue specificity">
    <text evidence="4 6 7">Ubiquitous. Highly expressed in the adrenal gland and testis. Weakly expressed in prostate, lung and brain. Expressed in the cerebellum.</text>
</comment>
<comment type="disease" evidence="7">
    <disease id="DI-04196">
        <name>Spinocerebellar ataxia 38</name>
        <acronym>SCA38</acronym>
        <description>A form of spinocerebellar ataxia, a clinically and genetically heterogeneous group of cerebellar disorders. Patients show progressive incoordination of gait and often poor coordination of hands, speech and eye movements, due to degeneration of the cerebellum with variable involvement of the brainstem and spinal cord. SCA38 is an autosomal dominant form characterized by adult-onset of slowly progressive gait ataxia accompanied by nystagmus. Brain MRI shows cerebellar atrophy.</description>
        <dbReference type="MIM" id="615957"/>
    </disease>
    <text>The disease is caused by variants affecting the gene represented in this entry.</text>
</comment>
<comment type="similarity">
    <text evidence="2">Belongs to the ELO family. ELOVL5 subfamily.</text>
</comment>
<comment type="sequence caution" evidence="11">
    <conflict type="erroneous initiation">
        <sequence resource="EMBL-CDS" id="AAF16688"/>
    </conflict>
    <text>Truncated N-terminus.</text>
</comment>
<comment type="sequence caution" evidence="11">
    <conflict type="erroneous initiation">
        <sequence resource="EMBL-CDS" id="BAC11178"/>
    </conflict>
    <text>Truncated N-terminus.</text>
</comment>
<organism>
    <name type="scientific">Homo sapiens</name>
    <name type="common">Human</name>
    <dbReference type="NCBI Taxonomy" id="9606"/>
    <lineage>
        <taxon>Eukaryota</taxon>
        <taxon>Metazoa</taxon>
        <taxon>Chordata</taxon>
        <taxon>Craniata</taxon>
        <taxon>Vertebrata</taxon>
        <taxon>Euteleostomi</taxon>
        <taxon>Mammalia</taxon>
        <taxon>Eutheria</taxon>
        <taxon>Euarchontoglires</taxon>
        <taxon>Primates</taxon>
        <taxon>Haplorrhini</taxon>
        <taxon>Catarrhini</taxon>
        <taxon>Hominidae</taxon>
        <taxon>Homo</taxon>
    </lineage>
</organism>
<dbReference type="EC" id="2.3.1.199" evidence="2 4 5 6"/>
<dbReference type="EMBL" id="AF231981">
    <property type="protein sequence ID" value="AAF70631.1"/>
    <property type="molecule type" value="mRNA"/>
</dbReference>
<dbReference type="EMBL" id="AF338241">
    <property type="protein sequence ID" value="AAM00193.1"/>
    <property type="molecule type" value="mRNA"/>
</dbReference>
<dbReference type="EMBL" id="AL136939">
    <property type="protein sequence ID" value="CAB66873.1"/>
    <property type="molecule type" value="mRNA"/>
</dbReference>
<dbReference type="EMBL" id="AK074889">
    <property type="protein sequence ID" value="BAC11270.1"/>
    <property type="molecule type" value="mRNA"/>
</dbReference>
<dbReference type="EMBL" id="AK302948">
    <property type="protein sequence ID" value="BAG64104.1"/>
    <property type="molecule type" value="mRNA"/>
</dbReference>
<dbReference type="EMBL" id="AB209798">
    <property type="protein sequence ID" value="BAD93035.1"/>
    <property type="molecule type" value="mRNA"/>
</dbReference>
<dbReference type="EMBL" id="AL034374">
    <property type="status" value="NOT_ANNOTATED_CDS"/>
    <property type="molecule type" value="Genomic_DNA"/>
</dbReference>
<dbReference type="EMBL" id="CH471081">
    <property type="protein sequence ID" value="EAX04419.1"/>
    <property type="molecule type" value="Genomic_DNA"/>
</dbReference>
<dbReference type="EMBL" id="BC017270">
    <property type="protein sequence ID" value="AAH17270.2"/>
    <property type="molecule type" value="mRNA"/>
</dbReference>
<dbReference type="EMBL" id="BC067123">
    <property type="protein sequence ID" value="AAH67123.2"/>
    <property type="molecule type" value="mRNA"/>
</dbReference>
<dbReference type="EMBL" id="BC074503">
    <property type="status" value="NOT_ANNOTATED_CDS"/>
    <property type="molecule type" value="mRNA"/>
</dbReference>
<dbReference type="EMBL" id="AK074748">
    <property type="protein sequence ID" value="BAC11178.1"/>
    <property type="status" value="ALT_INIT"/>
    <property type="molecule type" value="mRNA"/>
</dbReference>
<dbReference type="EMBL" id="AF111849">
    <property type="protein sequence ID" value="AAF16688.1"/>
    <property type="status" value="ALT_INIT"/>
    <property type="molecule type" value="mRNA"/>
</dbReference>
<dbReference type="CCDS" id="CCDS4951.1">
    <molecule id="Q9NYP7-1"/>
</dbReference>
<dbReference type="CCDS" id="CCDS56433.1">
    <molecule id="Q9NYP7-2"/>
</dbReference>
<dbReference type="CCDS" id="CCDS56434.1">
    <molecule id="Q9NYP7-3"/>
</dbReference>
<dbReference type="RefSeq" id="NP_001229757.1">
    <molecule id="Q9NYP7-2"/>
    <property type="nucleotide sequence ID" value="NM_001242828.2"/>
</dbReference>
<dbReference type="RefSeq" id="NP_001229759.1">
    <property type="nucleotide sequence ID" value="NM_001242830.1"/>
</dbReference>
<dbReference type="RefSeq" id="NP_001229760.1">
    <molecule id="Q9NYP7-3"/>
    <property type="nucleotide sequence ID" value="NM_001242831.2"/>
</dbReference>
<dbReference type="RefSeq" id="NP_001288785.1">
    <molecule id="Q9NYP7-1"/>
    <property type="nucleotide sequence ID" value="NM_001301856.2"/>
</dbReference>
<dbReference type="RefSeq" id="NP_068586.1">
    <molecule id="Q9NYP7-1"/>
    <property type="nucleotide sequence ID" value="NM_021814.5"/>
</dbReference>
<dbReference type="SMR" id="Q9NYP7"/>
<dbReference type="BioGRID" id="121914">
    <property type="interactions" value="370"/>
</dbReference>
<dbReference type="FunCoup" id="Q9NYP7">
    <property type="interactions" value="714"/>
</dbReference>
<dbReference type="IntAct" id="Q9NYP7">
    <property type="interactions" value="41"/>
</dbReference>
<dbReference type="MINT" id="Q9NYP7"/>
<dbReference type="STRING" id="9606.ENSP00000359956"/>
<dbReference type="BindingDB" id="Q9NYP7"/>
<dbReference type="ChEMBL" id="CHEMBL5937"/>
<dbReference type="DrugBank" id="DB00132">
    <property type="generic name" value="alpha-Linolenic acid"/>
</dbReference>
<dbReference type="DrugBank" id="DB11358">
    <property type="generic name" value="Evening primrose oil"/>
</dbReference>
<dbReference type="SwissLipids" id="SLP:000000253"/>
<dbReference type="TCDB" id="8.A.221.1.1">
    <property type="family name" value="the very long chain fatty acid elongase (vlcfa-e) family"/>
</dbReference>
<dbReference type="GlyGen" id="Q9NYP7">
    <property type="glycosylation" value="1 site, 1 O-linked glycan (1 site)"/>
</dbReference>
<dbReference type="iPTMnet" id="Q9NYP7"/>
<dbReference type="PhosphoSitePlus" id="Q9NYP7"/>
<dbReference type="SwissPalm" id="Q9NYP7"/>
<dbReference type="BioMuta" id="ELOVL5"/>
<dbReference type="DMDM" id="74753072"/>
<dbReference type="jPOST" id="Q9NYP7"/>
<dbReference type="MassIVE" id="Q9NYP7"/>
<dbReference type="PaxDb" id="9606-ENSP00000359956"/>
<dbReference type="PeptideAtlas" id="Q9NYP7"/>
<dbReference type="ProteomicsDB" id="27928"/>
<dbReference type="ProteomicsDB" id="65118"/>
<dbReference type="ProteomicsDB" id="83259">
    <molecule id="Q9NYP7-1"/>
</dbReference>
<dbReference type="Pumba" id="Q9NYP7"/>
<dbReference type="Antibodypedia" id="4471">
    <property type="antibodies" value="358 antibodies from 28 providers"/>
</dbReference>
<dbReference type="DNASU" id="60481"/>
<dbReference type="Ensembl" id="ENST00000304434.11">
    <molecule id="Q9NYP7-1"/>
    <property type="protein sequence ID" value="ENSP00000306640.6"/>
    <property type="gene ID" value="ENSG00000012660.14"/>
</dbReference>
<dbReference type="Ensembl" id="ENST00000370913.5">
    <molecule id="Q9NYP7-3"/>
    <property type="protein sequence ID" value="ENSP00000359951.5"/>
    <property type="gene ID" value="ENSG00000012660.14"/>
</dbReference>
<dbReference type="Ensembl" id="ENST00000370918.8">
    <molecule id="Q9NYP7-2"/>
    <property type="protein sequence ID" value="ENSP00000359956.5"/>
    <property type="gene ID" value="ENSG00000012660.14"/>
</dbReference>
<dbReference type="GeneID" id="60481"/>
<dbReference type="KEGG" id="hsa:60481"/>
<dbReference type="MANE-Select" id="ENST00000304434.11">
    <property type="protein sequence ID" value="ENSP00000306640.6"/>
    <property type="RefSeq nucleotide sequence ID" value="NM_021814.5"/>
    <property type="RefSeq protein sequence ID" value="NP_068586.1"/>
</dbReference>
<dbReference type="UCSC" id="uc003pbr.3">
    <molecule id="Q9NYP7-1"/>
    <property type="organism name" value="human"/>
</dbReference>
<dbReference type="AGR" id="HGNC:21308"/>
<dbReference type="CTD" id="60481"/>
<dbReference type="DisGeNET" id="60481"/>
<dbReference type="GeneCards" id="ELOVL5"/>
<dbReference type="GeneReviews" id="ELOVL5"/>
<dbReference type="HGNC" id="HGNC:21308">
    <property type="gene designation" value="ELOVL5"/>
</dbReference>
<dbReference type="HPA" id="ENSG00000012660">
    <property type="expression patterns" value="Low tissue specificity"/>
</dbReference>
<dbReference type="MalaCards" id="ELOVL5"/>
<dbReference type="MIM" id="611805">
    <property type="type" value="gene"/>
</dbReference>
<dbReference type="MIM" id="615957">
    <property type="type" value="phenotype"/>
</dbReference>
<dbReference type="neXtProt" id="NX_Q9NYP7"/>
<dbReference type="OpenTargets" id="ENSG00000012660"/>
<dbReference type="Orphanet" id="423296">
    <property type="disease" value="Spinocerebellar ataxia type 38"/>
</dbReference>
<dbReference type="PharmGKB" id="PA128394703"/>
<dbReference type="VEuPathDB" id="HostDB:ENSG00000012660"/>
<dbReference type="eggNOG" id="KOG3071">
    <property type="taxonomic scope" value="Eukaryota"/>
</dbReference>
<dbReference type="GeneTree" id="ENSGT01050000244838"/>
<dbReference type="HOGENOM" id="CLU_048483_0_1_1"/>
<dbReference type="InParanoid" id="Q9NYP7"/>
<dbReference type="OMA" id="CRFPMGW"/>
<dbReference type="OrthoDB" id="434092at2759"/>
<dbReference type="PAN-GO" id="Q9NYP7">
    <property type="GO annotations" value="7 GO annotations based on evolutionary models"/>
</dbReference>
<dbReference type="PhylomeDB" id="Q9NYP7"/>
<dbReference type="TreeFam" id="TF323454"/>
<dbReference type="BioCyc" id="MetaCyc:ENSG00000012660-MONOMER"/>
<dbReference type="PathwayCommons" id="Q9NYP7"/>
<dbReference type="Reactome" id="R-HSA-2046105">
    <property type="pathway name" value="Linoleic acid (LA) metabolism"/>
</dbReference>
<dbReference type="Reactome" id="R-HSA-2046106">
    <property type="pathway name" value="alpha-linolenic acid (ALA) metabolism"/>
</dbReference>
<dbReference type="Reactome" id="R-HSA-75876">
    <property type="pathway name" value="Synthesis of very long-chain fatty acyl-CoAs"/>
</dbReference>
<dbReference type="Reactome" id="R-HSA-9841922">
    <property type="pathway name" value="MLL4 and MLL3 complexes regulate expression of PPARG target genes in adipogenesis and hepatic steatosis"/>
</dbReference>
<dbReference type="SignaLink" id="Q9NYP7"/>
<dbReference type="SIGNOR" id="Q9NYP7"/>
<dbReference type="UniPathway" id="UPA00658"/>
<dbReference type="BioGRID-ORCS" id="60481">
    <property type="hits" value="16 hits in 1156 CRISPR screens"/>
</dbReference>
<dbReference type="ChiTaRS" id="ELOVL5">
    <property type="organism name" value="human"/>
</dbReference>
<dbReference type="GeneWiki" id="ELOVL5"/>
<dbReference type="GenomeRNAi" id="60481"/>
<dbReference type="Pharos" id="Q9NYP7">
    <property type="development level" value="Tbio"/>
</dbReference>
<dbReference type="PRO" id="PR:Q9NYP7"/>
<dbReference type="Proteomes" id="UP000005640">
    <property type="component" value="Chromosome 6"/>
</dbReference>
<dbReference type="RNAct" id="Q9NYP7">
    <property type="molecule type" value="protein"/>
</dbReference>
<dbReference type="Bgee" id="ENSG00000012660">
    <property type="expression patterns" value="Expressed in seminal vesicle and 209 other cell types or tissues"/>
</dbReference>
<dbReference type="ExpressionAtlas" id="Q9NYP7">
    <property type="expression patterns" value="baseline and differential"/>
</dbReference>
<dbReference type="GO" id="GO:0030425">
    <property type="term" value="C:dendrite"/>
    <property type="evidence" value="ECO:0007669"/>
    <property type="project" value="UniProtKB-SubCell"/>
</dbReference>
<dbReference type="GO" id="GO:0097447">
    <property type="term" value="C:dendritic tree"/>
    <property type="evidence" value="ECO:0000314"/>
    <property type="project" value="UniProtKB"/>
</dbReference>
<dbReference type="GO" id="GO:0005783">
    <property type="term" value="C:endoplasmic reticulum"/>
    <property type="evidence" value="ECO:0000314"/>
    <property type="project" value="HPA"/>
</dbReference>
<dbReference type="GO" id="GO:0005789">
    <property type="term" value="C:endoplasmic reticulum membrane"/>
    <property type="evidence" value="ECO:0000318"/>
    <property type="project" value="GO_Central"/>
</dbReference>
<dbReference type="GO" id="GO:0016020">
    <property type="term" value="C:membrane"/>
    <property type="evidence" value="ECO:0007005"/>
    <property type="project" value="UniProtKB"/>
</dbReference>
<dbReference type="GO" id="GO:0043025">
    <property type="term" value="C:neuronal cell body"/>
    <property type="evidence" value="ECO:0000314"/>
    <property type="project" value="UniProtKB"/>
</dbReference>
<dbReference type="GO" id="GO:0009922">
    <property type="term" value="F:fatty acid elongase activity"/>
    <property type="evidence" value="ECO:0000314"/>
    <property type="project" value="UniProtKB"/>
</dbReference>
<dbReference type="GO" id="GO:0036109">
    <property type="term" value="P:alpha-linolenic acid metabolic process"/>
    <property type="evidence" value="ECO:0000304"/>
    <property type="project" value="Reactome"/>
</dbReference>
<dbReference type="GO" id="GO:0034625">
    <property type="term" value="P:fatty acid elongation, monounsaturated fatty acid"/>
    <property type="evidence" value="ECO:0000314"/>
    <property type="project" value="UniProtKB"/>
</dbReference>
<dbReference type="GO" id="GO:0034626">
    <property type="term" value="P:fatty acid elongation, polyunsaturated fatty acid"/>
    <property type="evidence" value="ECO:0000314"/>
    <property type="project" value="UniProtKB"/>
</dbReference>
<dbReference type="GO" id="GO:0019367">
    <property type="term" value="P:fatty acid elongation, saturated fatty acid"/>
    <property type="evidence" value="ECO:0000318"/>
    <property type="project" value="GO_Central"/>
</dbReference>
<dbReference type="GO" id="GO:0043651">
    <property type="term" value="P:linoleic acid metabolic process"/>
    <property type="evidence" value="ECO:0000304"/>
    <property type="project" value="Reactome"/>
</dbReference>
<dbReference type="GO" id="GO:0042759">
    <property type="term" value="P:long-chain fatty acid biosynthetic process"/>
    <property type="evidence" value="ECO:0007669"/>
    <property type="project" value="Ensembl"/>
</dbReference>
<dbReference type="GO" id="GO:0035338">
    <property type="term" value="P:long-chain fatty-acyl-CoA biosynthetic process"/>
    <property type="evidence" value="ECO:0000304"/>
    <property type="project" value="Reactome"/>
</dbReference>
<dbReference type="GO" id="GO:0045723">
    <property type="term" value="P:positive regulation of fatty acid biosynthetic process"/>
    <property type="evidence" value="ECO:0000315"/>
    <property type="project" value="BHF-UCL"/>
</dbReference>
<dbReference type="GO" id="GO:0030148">
    <property type="term" value="P:sphingolipid biosynthetic process"/>
    <property type="evidence" value="ECO:0000318"/>
    <property type="project" value="GO_Central"/>
</dbReference>
<dbReference type="GO" id="GO:0006636">
    <property type="term" value="P:unsaturated fatty acid biosynthetic process"/>
    <property type="evidence" value="ECO:0007669"/>
    <property type="project" value="UniProtKB-UniRule"/>
</dbReference>
<dbReference type="GO" id="GO:0042761">
    <property type="term" value="P:very long-chain fatty acid biosynthetic process"/>
    <property type="evidence" value="ECO:0000314"/>
    <property type="project" value="UniProtKB"/>
</dbReference>
<dbReference type="HAMAP" id="MF_03205">
    <property type="entry name" value="VLCF_elongase_5"/>
    <property type="match status" value="1"/>
</dbReference>
<dbReference type="InterPro" id="IPR002076">
    <property type="entry name" value="ELO_fam"/>
</dbReference>
<dbReference type="InterPro" id="IPR033677">
    <property type="entry name" value="ELOVL5"/>
</dbReference>
<dbReference type="PANTHER" id="PTHR11157:SF18">
    <property type="entry name" value="ELONGATION OF VERY LONG CHAIN FATTY ACIDS PROTEIN 5"/>
    <property type="match status" value="1"/>
</dbReference>
<dbReference type="PANTHER" id="PTHR11157">
    <property type="entry name" value="FATTY ACID ACYL TRANSFERASE-RELATED"/>
    <property type="match status" value="1"/>
</dbReference>
<dbReference type="Pfam" id="PF01151">
    <property type="entry name" value="ELO"/>
    <property type="match status" value="1"/>
</dbReference>
<accession>Q9NYP7</accession>
<accession>B4DZJ2</accession>
<accession>F6SH78</accession>
<accession>Q59EL3</accession>
<accession>Q5TGH5</accession>
<accession>Q6NXE7</accession>
<accession>Q7L2S5</accession>
<accession>Q8NCG4</accession>
<accession>Q9UI22</accession>
<gene>
    <name evidence="2" type="primary">ELOVL5</name>
    <name type="synonym">ELOVL2</name>
    <name type="ORF">PRO0530</name>
</gene>
<evidence type="ECO:0000250" key="1">
    <source>
        <dbReference type="UniProtKB" id="Q8BHI7"/>
    </source>
</evidence>
<evidence type="ECO:0000255" key="2">
    <source>
        <dbReference type="HAMAP-Rule" id="MF_03205"/>
    </source>
</evidence>
<evidence type="ECO:0000256" key="3">
    <source>
        <dbReference type="SAM" id="MobiDB-lite"/>
    </source>
</evidence>
<evidence type="ECO:0000269" key="4">
    <source>
    </source>
</evidence>
<evidence type="ECO:0000269" key="5">
    <source>
    </source>
</evidence>
<evidence type="ECO:0000269" key="6">
    <source>
    </source>
</evidence>
<evidence type="ECO:0000269" key="7">
    <source>
    </source>
</evidence>
<evidence type="ECO:0000269" key="8">
    <source>
    </source>
</evidence>
<evidence type="ECO:0000303" key="9">
    <source>
    </source>
</evidence>
<evidence type="ECO:0000303" key="10">
    <source>
    </source>
</evidence>
<evidence type="ECO:0000305" key="11"/>
<evidence type="ECO:0000305" key="12">
    <source>
    </source>
</evidence>
<evidence type="ECO:0000305" key="13">
    <source>
    </source>
</evidence>
<evidence type="ECO:0007744" key="14">
    <source>
    </source>
</evidence>
<evidence type="ECO:0007744" key="15">
    <source>
    </source>
</evidence>
<protein>
    <recommendedName>
        <fullName evidence="2">Very long chain fatty acid elongase 5</fullName>
        <ecNumber evidence="2 4 5 6">2.3.1.199</ecNumber>
    </recommendedName>
    <alternativeName>
        <fullName evidence="2">3-keto acyl-CoA synthase ELOVL5</fullName>
    </alternativeName>
    <alternativeName>
        <fullName evidence="2">ELOVL fatty acid elongase 5</fullName>
        <shortName evidence="2">ELOVL FA elongase 5</shortName>
    </alternativeName>
    <alternativeName>
        <fullName evidence="2">Elongation of very long chain fatty acids protein 5</fullName>
    </alternativeName>
    <alternativeName>
        <fullName>Fatty acid elongase 1</fullName>
        <shortName>hELO1</shortName>
    </alternativeName>
    <alternativeName>
        <fullName evidence="2">Very long chain 3-ketoacyl-CoA synthase 5</fullName>
    </alternativeName>
    <alternativeName>
        <fullName evidence="2">Very long chain 3-oxoacyl-CoA synthase 5</fullName>
    </alternativeName>
</protein>
<keyword id="KW-0007">Acetylation</keyword>
<keyword id="KW-0025">Alternative splicing</keyword>
<keyword id="KW-0966">Cell projection</keyword>
<keyword id="KW-0225">Disease variant</keyword>
<keyword id="KW-0256">Endoplasmic reticulum</keyword>
<keyword id="KW-0275">Fatty acid biosynthesis</keyword>
<keyword id="KW-0276">Fatty acid metabolism</keyword>
<keyword id="KW-0444">Lipid biosynthesis</keyword>
<keyword id="KW-0443">Lipid metabolism</keyword>
<keyword id="KW-0472">Membrane</keyword>
<keyword id="KW-0523">Neurodegeneration</keyword>
<keyword id="KW-0597">Phosphoprotein</keyword>
<keyword id="KW-1267">Proteomics identification</keyword>
<keyword id="KW-1185">Reference proteome</keyword>
<keyword id="KW-0950">Spinocerebellar ataxia</keyword>
<keyword id="KW-0808">Transferase</keyword>
<keyword id="KW-0812">Transmembrane</keyword>
<keyword id="KW-1133">Transmembrane helix</keyword>
<feature type="chain" id="PRO_0000282838" description="Very long chain fatty acid elongase 5">
    <location>
        <begin position="1"/>
        <end position="299"/>
    </location>
</feature>
<feature type="transmembrane region" description="Helical" evidence="2">
    <location>
        <begin position="26"/>
        <end position="46"/>
    </location>
</feature>
<feature type="transmembrane region" description="Helical" evidence="2">
    <location>
        <begin position="64"/>
        <end position="84"/>
    </location>
</feature>
<feature type="transmembrane region" description="Helical" evidence="2">
    <location>
        <begin position="112"/>
        <end position="132"/>
    </location>
</feature>
<feature type="transmembrane region" description="Helical" evidence="2">
    <location>
        <begin position="139"/>
        <end position="158"/>
    </location>
</feature>
<feature type="transmembrane region" description="Helical" evidence="2">
    <location>
        <begin position="168"/>
        <end position="187"/>
    </location>
</feature>
<feature type="transmembrane region" description="Helical" evidence="2">
    <location>
        <begin position="205"/>
        <end position="225"/>
    </location>
</feature>
<feature type="transmembrane region" description="Helical" evidence="2">
    <location>
        <begin position="226"/>
        <end position="246"/>
    </location>
</feature>
<feature type="region of interest" description="Disordered" evidence="3">
    <location>
        <begin position="274"/>
        <end position="299"/>
    </location>
</feature>
<feature type="compositionally biased region" description="Polar residues" evidence="3">
    <location>
        <begin position="279"/>
        <end position="288"/>
    </location>
</feature>
<feature type="modified residue" description="N-acetylmethionine" evidence="15">
    <location>
        <position position="1"/>
    </location>
</feature>
<feature type="modified residue" description="Phosphoserine" evidence="14">
    <location>
        <position position="285"/>
    </location>
</feature>
<feature type="splice variant" id="VSP_045917" description="In isoform 3." evidence="10">
    <original>DTRVKGWFLLDNYIPTFICSVIYLLIVWLGPKYMRNKQPFSCRGILVVYNLGLTLLSLYMFCELVTGVW</original>
    <variation>GISSSVLRMGPPLHTVVGWLQQLQAAHSEEEEKMFHLCGFKHKEVVSQSSLPAVIPQNSLATIASHAPA</variation>
    <location>
        <begin position="20"/>
        <end position="88"/>
    </location>
</feature>
<feature type="splice variant" id="VSP_045918" description="In isoform 2." evidence="9">
    <original>E</original>
    <variation>ESKREQPRRSACASRTDPSTQQQLPENR</variation>
    <location>
        <position position="82"/>
    </location>
</feature>
<feature type="splice variant" id="VSP_045919" description="In isoform 3." evidence="10">
    <location>
        <begin position="89"/>
        <end position="299"/>
    </location>
</feature>
<feature type="sequence variant" id="VAR_072361" description="In SCA38; dbSNP:rs587777671." evidence="7">
    <original>L</original>
    <variation>V</variation>
    <location>
        <position position="72"/>
    </location>
</feature>
<feature type="sequence variant" id="VAR_072362" description="In SCA38; dbSNP:rs587777670." evidence="7">
    <original>G</original>
    <variation>V</variation>
    <location>
        <position position="230"/>
    </location>
</feature>
<feature type="sequence conflict" description="In Ref. 4; BAG64104." evidence="11" ref="4">
    <original>F</original>
    <variation>L</variation>
    <location>
        <position position="59"/>
    </location>
</feature>
<feature type="sequence conflict" description="In Ref. 4; BAD93035." evidence="11" ref="4">
    <original>YFGATLNSFIHVLMYSYYGLSSVPSMRPYLWWKKYITQGQLLQFVLTIIQTSCGVIWPCTFPLGWLYFQIGYMISLIALFTNFYIQTYNKKGASRR</original>
    <variation>SVCADNHPDQLRGHLAVHIPSWLVVFPDWIHDFPDCSLHKLLHSDLQQERGLPKERPPEGPPEWVHGCCEWTHQQLFTPGKQCEAKEAAEGLKSKN</variation>
    <location>
        <begin position="167"/>
        <end position="262"/>
    </location>
</feature>
<feature type="sequence conflict" description="In Ref. 9; BAC11178." evidence="11" ref="9">
    <original>QGQ</original>
    <variation>EFH</variation>
    <location>
        <begin position="204"/>
        <end position="206"/>
    </location>
</feature>
<feature type="sequence conflict" description="In Ref. 9; BAC11178." evidence="11" ref="9">
    <original>F</original>
    <variation>S</variation>
    <location>
        <position position="227"/>
    </location>
</feature>
<reference key="1">
    <citation type="journal article" date="2000" name="Biochem. J.">
        <title>Cloning of a human cDNA encoding a novel enzyme involved in the elongation of long-chain polyunsaturated fatty acids.</title>
        <authorList>
            <person name="Leonard A.E."/>
            <person name="Bobik E.G."/>
            <person name="Dorado J."/>
            <person name="Kroeger P.E."/>
            <person name="Chuang L.-T."/>
            <person name="Thurmond J.M."/>
            <person name="Parker-Barnes J.M."/>
            <person name="Das T."/>
            <person name="Huang Y.-S."/>
            <person name="Mukerji P."/>
        </authorList>
    </citation>
    <scope>NUCLEOTIDE SEQUENCE [MRNA] (ISOFORM 1)</scope>
    <scope>FUNCTION</scope>
    <scope>CATALYTIC ACTIVITY</scope>
    <scope>TISSUE SPECIFICITY</scope>
    <source>
        <tissue>Liver</tissue>
    </source>
</reference>
<reference key="2">
    <citation type="submission" date="2001-01" db="EMBL/GenBank/DDBJ databases">
        <title>Homo sapiens mRNA for elongation of very long chain fatty acids (FEN1/Elo2, SUR4/Elo3, yeast)-like 2 (ELOVL2).</title>
        <authorList>
            <person name="Suzuki T."/>
            <person name="Nitta A."/>
            <person name="Morita R."/>
            <person name="Sugimoto Y."/>
            <person name="Yamakawa K."/>
        </authorList>
    </citation>
    <scope>NUCLEOTIDE SEQUENCE [MRNA] (ISOFORM 1)</scope>
</reference>
<reference key="3">
    <citation type="journal article" date="2001" name="Genome Res.">
        <title>Towards a catalog of human genes and proteins: sequencing and analysis of 500 novel complete protein coding human cDNAs.</title>
        <authorList>
            <person name="Wiemann S."/>
            <person name="Weil B."/>
            <person name="Wellenreuther R."/>
            <person name="Gassenhuber J."/>
            <person name="Glassl S."/>
            <person name="Ansorge W."/>
            <person name="Boecher M."/>
            <person name="Bloecker H."/>
            <person name="Bauersachs S."/>
            <person name="Blum H."/>
            <person name="Lauber J."/>
            <person name="Duesterhoeft A."/>
            <person name="Beyer A."/>
            <person name="Koehrer K."/>
            <person name="Strack N."/>
            <person name="Mewes H.-W."/>
            <person name="Ottenwaelder B."/>
            <person name="Obermaier B."/>
            <person name="Tampe J."/>
            <person name="Heubner D."/>
            <person name="Wambutt R."/>
            <person name="Korn B."/>
            <person name="Klein M."/>
            <person name="Poustka A."/>
        </authorList>
    </citation>
    <scope>NUCLEOTIDE SEQUENCE [LARGE SCALE MRNA] (ISOFORM 1)</scope>
    <source>
        <tissue>Uterus</tissue>
    </source>
</reference>
<reference key="4">
    <citation type="journal article" date="2004" name="Nat. Genet.">
        <title>Complete sequencing and characterization of 21,243 full-length human cDNAs.</title>
        <authorList>
            <person name="Ota T."/>
            <person name="Suzuki Y."/>
            <person name="Nishikawa T."/>
            <person name="Otsuki T."/>
            <person name="Sugiyama T."/>
            <person name="Irie R."/>
            <person name="Wakamatsu A."/>
            <person name="Hayashi K."/>
            <person name="Sato H."/>
            <person name="Nagai K."/>
            <person name="Kimura K."/>
            <person name="Makita H."/>
            <person name="Sekine M."/>
            <person name="Obayashi M."/>
            <person name="Nishi T."/>
            <person name="Shibahara T."/>
            <person name="Tanaka T."/>
            <person name="Ishii S."/>
            <person name="Yamamoto J."/>
            <person name="Saito K."/>
            <person name="Kawai Y."/>
            <person name="Isono Y."/>
            <person name="Nakamura Y."/>
            <person name="Nagahari K."/>
            <person name="Murakami K."/>
            <person name="Yasuda T."/>
            <person name="Iwayanagi T."/>
            <person name="Wagatsuma M."/>
            <person name="Shiratori A."/>
            <person name="Sudo H."/>
            <person name="Hosoiri T."/>
            <person name="Kaku Y."/>
            <person name="Kodaira H."/>
            <person name="Kondo H."/>
            <person name="Sugawara M."/>
            <person name="Takahashi M."/>
            <person name="Kanda K."/>
            <person name="Yokoi T."/>
            <person name="Furuya T."/>
            <person name="Kikkawa E."/>
            <person name="Omura Y."/>
            <person name="Abe K."/>
            <person name="Kamihara K."/>
            <person name="Katsuta N."/>
            <person name="Sato K."/>
            <person name="Tanikawa M."/>
            <person name="Yamazaki M."/>
            <person name="Ninomiya K."/>
            <person name="Ishibashi T."/>
            <person name="Yamashita H."/>
            <person name="Murakawa K."/>
            <person name="Fujimori K."/>
            <person name="Tanai H."/>
            <person name="Kimata M."/>
            <person name="Watanabe M."/>
            <person name="Hiraoka S."/>
            <person name="Chiba Y."/>
            <person name="Ishida S."/>
            <person name="Ono Y."/>
            <person name="Takiguchi S."/>
            <person name="Watanabe S."/>
            <person name="Yosida M."/>
            <person name="Hotuta T."/>
            <person name="Kusano J."/>
            <person name="Kanehori K."/>
            <person name="Takahashi-Fujii A."/>
            <person name="Hara H."/>
            <person name="Tanase T.-O."/>
            <person name="Nomura Y."/>
            <person name="Togiya S."/>
            <person name="Komai F."/>
            <person name="Hara R."/>
            <person name="Takeuchi K."/>
            <person name="Arita M."/>
            <person name="Imose N."/>
            <person name="Musashino K."/>
            <person name="Yuuki H."/>
            <person name="Oshima A."/>
            <person name="Sasaki N."/>
            <person name="Aotsuka S."/>
            <person name="Yoshikawa Y."/>
            <person name="Matsunawa H."/>
            <person name="Ichihara T."/>
            <person name="Shiohata N."/>
            <person name="Sano S."/>
            <person name="Moriya S."/>
            <person name="Momiyama H."/>
            <person name="Satoh N."/>
            <person name="Takami S."/>
            <person name="Terashima Y."/>
            <person name="Suzuki O."/>
            <person name="Nakagawa S."/>
            <person name="Senoh A."/>
            <person name="Mizoguchi H."/>
            <person name="Goto Y."/>
            <person name="Shimizu F."/>
            <person name="Wakebe H."/>
            <person name="Hishigaki H."/>
            <person name="Watanabe T."/>
            <person name="Sugiyama A."/>
            <person name="Takemoto M."/>
            <person name="Kawakami B."/>
            <person name="Yamazaki M."/>
            <person name="Watanabe K."/>
            <person name="Kumagai A."/>
            <person name="Itakura S."/>
            <person name="Fukuzumi Y."/>
            <person name="Fujimori Y."/>
            <person name="Komiyama M."/>
            <person name="Tashiro H."/>
            <person name="Tanigami A."/>
            <person name="Fujiwara T."/>
            <person name="Ono T."/>
            <person name="Yamada K."/>
            <person name="Fujii Y."/>
            <person name="Ozaki K."/>
            <person name="Hirao M."/>
            <person name="Ohmori Y."/>
            <person name="Kawabata A."/>
            <person name="Hikiji T."/>
            <person name="Kobatake N."/>
            <person name="Inagaki H."/>
            <person name="Ikema Y."/>
            <person name="Okamoto S."/>
            <person name="Okitani R."/>
            <person name="Kawakami T."/>
            <person name="Noguchi S."/>
            <person name="Itoh T."/>
            <person name="Shigeta K."/>
            <person name="Senba T."/>
            <person name="Matsumura K."/>
            <person name="Nakajima Y."/>
            <person name="Mizuno T."/>
            <person name="Morinaga M."/>
            <person name="Sasaki M."/>
            <person name="Togashi T."/>
            <person name="Oyama M."/>
            <person name="Hata H."/>
            <person name="Watanabe M."/>
            <person name="Komatsu T."/>
            <person name="Mizushima-Sugano J."/>
            <person name="Satoh T."/>
            <person name="Shirai Y."/>
            <person name="Takahashi Y."/>
            <person name="Nakagawa K."/>
            <person name="Okumura K."/>
            <person name="Nagase T."/>
            <person name="Nomura N."/>
            <person name="Kikuchi H."/>
            <person name="Masuho Y."/>
            <person name="Yamashita R."/>
            <person name="Nakai K."/>
            <person name="Yada T."/>
            <person name="Nakamura Y."/>
            <person name="Ohara O."/>
            <person name="Isogai T."/>
            <person name="Sugano S."/>
        </authorList>
    </citation>
    <scope>NUCLEOTIDE SEQUENCE [LARGE SCALE MRNA] (ISOFORMS 1 AND 2)</scope>
    <source>
        <tissue>Testis</tissue>
    </source>
</reference>
<reference key="5">
    <citation type="submission" date="2005-03" db="EMBL/GenBank/DDBJ databases">
        <authorList>
            <person name="Totoki Y."/>
            <person name="Toyoda A."/>
            <person name="Takeda T."/>
            <person name="Sakaki Y."/>
            <person name="Tanaka A."/>
            <person name="Yokoyama S."/>
            <person name="Ohara O."/>
            <person name="Nagase T."/>
            <person name="Kikuno R.F."/>
        </authorList>
    </citation>
    <scope>NUCLEOTIDE SEQUENCE [LARGE SCALE MRNA] (ISOFORM 1)</scope>
    <source>
        <tissue>Brain</tissue>
    </source>
</reference>
<reference key="6">
    <citation type="journal article" date="2003" name="Nature">
        <title>The DNA sequence and analysis of human chromosome 6.</title>
        <authorList>
            <person name="Mungall A.J."/>
            <person name="Palmer S.A."/>
            <person name="Sims S.K."/>
            <person name="Edwards C.A."/>
            <person name="Ashurst J.L."/>
            <person name="Wilming L."/>
            <person name="Jones M.C."/>
            <person name="Horton R."/>
            <person name="Hunt S.E."/>
            <person name="Scott C.E."/>
            <person name="Gilbert J.G.R."/>
            <person name="Clamp M.E."/>
            <person name="Bethel G."/>
            <person name="Milne S."/>
            <person name="Ainscough R."/>
            <person name="Almeida J.P."/>
            <person name="Ambrose K.D."/>
            <person name="Andrews T.D."/>
            <person name="Ashwell R.I.S."/>
            <person name="Babbage A.K."/>
            <person name="Bagguley C.L."/>
            <person name="Bailey J."/>
            <person name="Banerjee R."/>
            <person name="Barker D.J."/>
            <person name="Barlow K.F."/>
            <person name="Bates K."/>
            <person name="Beare D.M."/>
            <person name="Beasley H."/>
            <person name="Beasley O."/>
            <person name="Bird C.P."/>
            <person name="Blakey S.E."/>
            <person name="Bray-Allen S."/>
            <person name="Brook J."/>
            <person name="Brown A.J."/>
            <person name="Brown J.Y."/>
            <person name="Burford D.C."/>
            <person name="Burrill W."/>
            <person name="Burton J."/>
            <person name="Carder C."/>
            <person name="Carter N.P."/>
            <person name="Chapman J.C."/>
            <person name="Clark S.Y."/>
            <person name="Clark G."/>
            <person name="Clee C.M."/>
            <person name="Clegg S."/>
            <person name="Cobley V."/>
            <person name="Collier R.E."/>
            <person name="Collins J.E."/>
            <person name="Colman L.K."/>
            <person name="Corby N.R."/>
            <person name="Coville G.J."/>
            <person name="Culley K.M."/>
            <person name="Dhami P."/>
            <person name="Davies J."/>
            <person name="Dunn M."/>
            <person name="Earthrowl M.E."/>
            <person name="Ellington A.E."/>
            <person name="Evans K.A."/>
            <person name="Faulkner L."/>
            <person name="Francis M.D."/>
            <person name="Frankish A."/>
            <person name="Frankland J."/>
            <person name="French L."/>
            <person name="Garner P."/>
            <person name="Garnett J."/>
            <person name="Ghori M.J."/>
            <person name="Gilby L.M."/>
            <person name="Gillson C.J."/>
            <person name="Glithero R.J."/>
            <person name="Grafham D.V."/>
            <person name="Grant M."/>
            <person name="Gribble S."/>
            <person name="Griffiths C."/>
            <person name="Griffiths M.N.D."/>
            <person name="Hall R."/>
            <person name="Halls K.S."/>
            <person name="Hammond S."/>
            <person name="Harley J.L."/>
            <person name="Hart E.A."/>
            <person name="Heath P.D."/>
            <person name="Heathcott R."/>
            <person name="Holmes S.J."/>
            <person name="Howden P.J."/>
            <person name="Howe K.L."/>
            <person name="Howell G.R."/>
            <person name="Huckle E."/>
            <person name="Humphray S.J."/>
            <person name="Humphries M.D."/>
            <person name="Hunt A.R."/>
            <person name="Johnson C.M."/>
            <person name="Joy A.A."/>
            <person name="Kay M."/>
            <person name="Keenan S.J."/>
            <person name="Kimberley A.M."/>
            <person name="King A."/>
            <person name="Laird G.K."/>
            <person name="Langford C."/>
            <person name="Lawlor S."/>
            <person name="Leongamornlert D.A."/>
            <person name="Leversha M."/>
            <person name="Lloyd C.R."/>
            <person name="Lloyd D.M."/>
            <person name="Loveland J.E."/>
            <person name="Lovell J."/>
            <person name="Martin S."/>
            <person name="Mashreghi-Mohammadi M."/>
            <person name="Maslen G.L."/>
            <person name="Matthews L."/>
            <person name="McCann O.T."/>
            <person name="McLaren S.J."/>
            <person name="McLay K."/>
            <person name="McMurray A."/>
            <person name="Moore M.J.F."/>
            <person name="Mullikin J.C."/>
            <person name="Niblett D."/>
            <person name="Nickerson T."/>
            <person name="Novik K.L."/>
            <person name="Oliver K."/>
            <person name="Overton-Larty E.K."/>
            <person name="Parker A."/>
            <person name="Patel R."/>
            <person name="Pearce A.V."/>
            <person name="Peck A.I."/>
            <person name="Phillimore B.J.C.T."/>
            <person name="Phillips S."/>
            <person name="Plumb R.W."/>
            <person name="Porter K.M."/>
            <person name="Ramsey Y."/>
            <person name="Ranby S.A."/>
            <person name="Rice C.M."/>
            <person name="Ross M.T."/>
            <person name="Searle S.M."/>
            <person name="Sehra H.K."/>
            <person name="Sheridan E."/>
            <person name="Skuce C.D."/>
            <person name="Smith S."/>
            <person name="Smith M."/>
            <person name="Spraggon L."/>
            <person name="Squares S.L."/>
            <person name="Steward C.A."/>
            <person name="Sycamore N."/>
            <person name="Tamlyn-Hall G."/>
            <person name="Tester J."/>
            <person name="Theaker A.J."/>
            <person name="Thomas D.W."/>
            <person name="Thorpe A."/>
            <person name="Tracey A."/>
            <person name="Tromans A."/>
            <person name="Tubby B."/>
            <person name="Wall M."/>
            <person name="Wallis J.M."/>
            <person name="West A.P."/>
            <person name="White S.S."/>
            <person name="Whitehead S.L."/>
            <person name="Whittaker H."/>
            <person name="Wild A."/>
            <person name="Willey D.J."/>
            <person name="Wilmer T.E."/>
            <person name="Wood J.M."/>
            <person name="Wray P.W."/>
            <person name="Wyatt J.C."/>
            <person name="Young L."/>
            <person name="Younger R.M."/>
            <person name="Bentley D.R."/>
            <person name="Coulson A."/>
            <person name="Durbin R.M."/>
            <person name="Hubbard T."/>
            <person name="Sulston J.E."/>
            <person name="Dunham I."/>
            <person name="Rogers J."/>
            <person name="Beck S."/>
        </authorList>
    </citation>
    <scope>NUCLEOTIDE SEQUENCE [LARGE SCALE GENOMIC DNA]</scope>
</reference>
<reference key="7">
    <citation type="submission" date="2005-09" db="EMBL/GenBank/DDBJ databases">
        <authorList>
            <person name="Mural R.J."/>
            <person name="Istrail S."/>
            <person name="Sutton G.G."/>
            <person name="Florea L."/>
            <person name="Halpern A.L."/>
            <person name="Mobarry C.M."/>
            <person name="Lippert R."/>
            <person name="Walenz B."/>
            <person name="Shatkay H."/>
            <person name="Dew I."/>
            <person name="Miller J.R."/>
            <person name="Flanigan M.J."/>
            <person name="Edwards N.J."/>
            <person name="Bolanos R."/>
            <person name="Fasulo D."/>
            <person name="Halldorsson B.V."/>
            <person name="Hannenhalli S."/>
            <person name="Turner R."/>
            <person name="Yooseph S."/>
            <person name="Lu F."/>
            <person name="Nusskern D.R."/>
            <person name="Shue B.C."/>
            <person name="Zheng X.H."/>
            <person name="Zhong F."/>
            <person name="Delcher A.L."/>
            <person name="Huson D.H."/>
            <person name="Kravitz S.A."/>
            <person name="Mouchard L."/>
            <person name="Reinert K."/>
            <person name="Remington K.A."/>
            <person name="Clark A.G."/>
            <person name="Waterman M.S."/>
            <person name="Eichler E.E."/>
            <person name="Adams M.D."/>
            <person name="Hunkapiller M.W."/>
            <person name="Myers E.W."/>
            <person name="Venter J.C."/>
        </authorList>
    </citation>
    <scope>NUCLEOTIDE SEQUENCE [LARGE SCALE GENOMIC DNA]</scope>
</reference>
<reference key="8">
    <citation type="journal article" date="2004" name="Genome Res.">
        <title>The status, quality, and expansion of the NIH full-length cDNA project: the Mammalian Gene Collection (MGC).</title>
        <authorList>
            <consortium name="The MGC Project Team"/>
        </authorList>
    </citation>
    <scope>NUCLEOTIDE SEQUENCE [LARGE SCALE MRNA] (ISOFORMS 1 AND 3)</scope>
    <source>
        <tissue>Eye</tissue>
        <tissue>Leiomyosarcoma</tissue>
        <tissue>Skin</tissue>
    </source>
</reference>
<reference key="9">
    <citation type="journal article" date="2005" name="DNA Res.">
        <title>Signal sequence and keyword trap in silico for selection of full-length human cDNAs encoding secretion or membrane proteins from oligo-capped cDNA libraries.</title>
        <authorList>
            <person name="Otsuki T."/>
            <person name="Ota T."/>
            <person name="Nishikawa T."/>
            <person name="Hayashi K."/>
            <person name="Suzuki Y."/>
            <person name="Yamamoto J."/>
            <person name="Wakamatsu A."/>
            <person name="Kimura K."/>
            <person name="Sakamoto K."/>
            <person name="Hatano N."/>
            <person name="Kawai Y."/>
            <person name="Ishii S."/>
            <person name="Saito K."/>
            <person name="Kojima S."/>
            <person name="Sugiyama T."/>
            <person name="Ono T."/>
            <person name="Okano K."/>
            <person name="Yoshikawa Y."/>
            <person name="Aotsuka S."/>
            <person name="Sasaki N."/>
            <person name="Hattori A."/>
            <person name="Okumura K."/>
            <person name="Nagai K."/>
            <person name="Sugano S."/>
            <person name="Isogai T."/>
        </authorList>
    </citation>
    <scope>NUCLEOTIDE SEQUENCE [LARGE SCALE MRNA] OF 179-299 (ISOFORM 1)</scope>
</reference>
<reference key="10">
    <citation type="submission" date="1998-12" db="EMBL/GenBank/DDBJ databases">
        <authorList>
            <person name="Zhang C."/>
            <person name="Yu Y."/>
            <person name="Zhang S."/>
            <person name="Ouyang S."/>
            <person name="Luo L."/>
            <person name="Wei H."/>
            <person name="Zhou G."/>
            <person name="Zhang Y."/>
            <person name="Liu M."/>
            <person name="He F."/>
        </authorList>
    </citation>
    <scope>NUCLEOTIDE SEQUENCE [LARGE SCALE MRNA] OF 204-299 (ISOFORM 1)</scope>
    <source>
        <tissue>Liver</tissue>
    </source>
</reference>
<reference key="11">
    <citation type="journal article" date="2008" name="Mol. Cell">
        <title>Kinase-selective enrichment enables quantitative phosphoproteomics of the kinome across the cell cycle.</title>
        <authorList>
            <person name="Daub H."/>
            <person name="Olsen J.V."/>
            <person name="Bairlein M."/>
            <person name="Gnad F."/>
            <person name="Oppermann F.S."/>
            <person name="Korner R."/>
            <person name="Greff Z."/>
            <person name="Keri G."/>
            <person name="Stemmann O."/>
            <person name="Mann M."/>
        </authorList>
    </citation>
    <scope>IDENTIFICATION BY MASS SPECTROMETRY [LARGE SCALE ANALYSIS]</scope>
    <source>
        <tissue>Cervix carcinoma</tissue>
    </source>
</reference>
<reference key="12">
    <citation type="journal article" date="2008" name="Proc. Natl. Acad. Sci. U.S.A.">
        <title>A quantitative atlas of mitotic phosphorylation.</title>
        <authorList>
            <person name="Dephoure N."/>
            <person name="Zhou C."/>
            <person name="Villen J."/>
            <person name="Beausoleil S.A."/>
            <person name="Bakalarski C.E."/>
            <person name="Elledge S.J."/>
            <person name="Gygi S.P."/>
        </authorList>
    </citation>
    <scope>IDENTIFICATION BY MASS SPECTROMETRY [LARGE SCALE ANALYSIS]</scope>
    <source>
        <tissue>Cervix carcinoma</tissue>
    </source>
</reference>
<reference key="13">
    <citation type="journal article" date="2009" name="Lipids">
        <title>Development of a high-density assay for long-chain fatty acyl-CoA elongases.</title>
        <authorList>
            <person name="Kitazawa H."/>
            <person name="Miyamoto Y."/>
            <person name="Shimamura K."/>
            <person name="Nagumo A."/>
            <person name="Tokita S."/>
        </authorList>
    </citation>
    <scope>CATALYTIC ACTIVITY</scope>
</reference>
<reference key="14">
    <citation type="journal article" date="2010" name="Proc. Natl. Acad. Sci. U.S.A.">
        <title>ELOVL1 production of C24 acyl-CoAs is linked to C24 sphingolipid synthesis.</title>
        <authorList>
            <person name="Ohno Y."/>
            <person name="Suto S."/>
            <person name="Yamanaka M."/>
            <person name="Mizutani Y."/>
            <person name="Mitsutake S."/>
            <person name="Igarashi Y."/>
            <person name="Sassa T."/>
            <person name="Kihara A."/>
        </authorList>
    </citation>
    <scope>FUNCTION</scope>
    <scope>CATALYTIC ACTIVITY</scope>
    <scope>PATHWAY</scope>
    <scope>SUBCELLULAR LOCATION</scope>
    <scope>TISSUE SPECIFICITY</scope>
</reference>
<reference key="15">
    <citation type="journal article" date="2010" name="Sci. Signal.">
        <title>Quantitative phosphoproteomics reveals widespread full phosphorylation site occupancy during mitosis.</title>
        <authorList>
            <person name="Olsen J.V."/>
            <person name="Vermeulen M."/>
            <person name="Santamaria A."/>
            <person name="Kumar C."/>
            <person name="Miller M.L."/>
            <person name="Jensen L.J."/>
            <person name="Gnad F."/>
            <person name="Cox J."/>
            <person name="Jensen T.S."/>
            <person name="Nigg E.A."/>
            <person name="Brunak S."/>
            <person name="Mann M."/>
        </authorList>
    </citation>
    <scope>PHOSPHORYLATION [LARGE SCALE ANALYSIS] AT SER-285</scope>
    <scope>IDENTIFICATION BY MASS SPECTROMETRY [LARGE SCALE ANALYSIS]</scope>
    <source>
        <tissue>Cervix carcinoma</tissue>
    </source>
</reference>
<reference key="16">
    <citation type="journal article" date="2011" name="Sci. Signal.">
        <title>System-wide temporal characterization of the proteome and phosphoproteome of human embryonic stem cell differentiation.</title>
        <authorList>
            <person name="Rigbolt K.T."/>
            <person name="Prokhorova T.A."/>
            <person name="Akimov V."/>
            <person name="Henningsen J."/>
            <person name="Johansen P.T."/>
            <person name="Kratchmarova I."/>
            <person name="Kassem M."/>
            <person name="Mann M."/>
            <person name="Olsen J.V."/>
            <person name="Blagoev B."/>
        </authorList>
    </citation>
    <scope>IDENTIFICATION BY MASS SPECTROMETRY [LARGE SCALE ANALYSIS]</scope>
</reference>
<reference key="17">
    <citation type="journal article" date="2013" name="J. Proteome Res.">
        <title>Toward a comprehensive characterization of a human cancer cell phosphoproteome.</title>
        <authorList>
            <person name="Zhou H."/>
            <person name="Di Palma S."/>
            <person name="Preisinger C."/>
            <person name="Peng M."/>
            <person name="Polat A.N."/>
            <person name="Heck A.J."/>
            <person name="Mohammed S."/>
        </authorList>
    </citation>
    <scope>IDENTIFICATION BY MASS SPECTROMETRY [LARGE SCALE ANALYSIS]</scope>
    <source>
        <tissue>Cervix carcinoma</tissue>
    </source>
</reference>
<reference key="18">
    <citation type="journal article" date="2014" name="Am. J. Hum. Genet.">
        <title>ELOVL5 mutations cause spinocerebellar ataxia 38.</title>
        <authorList>
            <person name="Di Gregorio E."/>
            <person name="Borroni B."/>
            <person name="Giorgio E."/>
            <person name="Lacerenza D."/>
            <person name="Ferrero M."/>
            <person name="Lo Buono N."/>
            <person name="Ragusa N."/>
            <person name="Mancini C."/>
            <person name="Gaussen M."/>
            <person name="Calcia A."/>
            <person name="Mitro N."/>
            <person name="Hoxha E."/>
            <person name="Mura I."/>
            <person name="Coviello D.A."/>
            <person name="Moon Y.A."/>
            <person name="Tesson C."/>
            <person name="Vaula G."/>
            <person name="Couarch P."/>
            <person name="Orsi L."/>
            <person name="Duregon E."/>
            <person name="Papotti M.G."/>
            <person name="Deleuze J.F."/>
            <person name="Imbert J."/>
            <person name="Costanzi C."/>
            <person name="Padovani A."/>
            <person name="Giunti P."/>
            <person name="Maillet-Vioud M."/>
            <person name="Durr A."/>
            <person name="Brice A."/>
            <person name="Tempia F."/>
            <person name="Funaro A."/>
            <person name="Boccone L."/>
            <person name="Caruso D."/>
            <person name="Stevanin G."/>
            <person name="Brusco A."/>
        </authorList>
    </citation>
    <scope>SUBCELLULAR LOCATION</scope>
    <scope>TISSUE SPECIFICITY</scope>
    <scope>INVOLVEMENT IN SCA38</scope>
    <scope>VARIANTS SCA38 VAL-72 AND VAL-230</scope>
</reference>
<reference key="19">
    <citation type="journal article" date="2015" name="Proteomics">
        <title>N-terminome analysis of the human mitochondrial proteome.</title>
        <authorList>
            <person name="Vaca Jacome A.S."/>
            <person name="Rabilloud T."/>
            <person name="Schaeffer-Reiss C."/>
            <person name="Rompais M."/>
            <person name="Ayoub D."/>
            <person name="Lane L."/>
            <person name="Bairoch A."/>
            <person name="Van Dorsselaer A."/>
            <person name="Carapito C."/>
        </authorList>
    </citation>
    <scope>ACETYLATION [LARGE SCALE ANALYSIS] AT MET-1</scope>
    <scope>IDENTIFICATION BY MASS SPECTROMETRY [LARGE SCALE ANALYSIS]</scope>
</reference>
<reference key="20">
    <citation type="journal article" date="2024" name="Biochem. Biophys. Res. Commun.">
        <title>The 3-hydroxyacyl-CoA dehydratase 1/2 form complex with trans-2-enoyl-CoA reductase involved in substrates transfer in very long chain fatty acid elongation.</title>
        <authorList>
            <person name="Zhou Y."/>
            <person name="Lv R."/>
            <person name="Ye R.D."/>
            <person name="Ren R."/>
            <person name="Yu L."/>
        </authorList>
    </citation>
    <scope>INTERACTION WITH TECR</scope>
</reference>
<sequence>MEHFDASLSTYFKALLGPRDTRVKGWFLLDNYIPTFICSVIYLLIVWLGPKYMRNKQPFSCRGILVVYNLGLTLLSLYMFCELVTGVWEGKYNFFCQGTRTAGESDMKIIRVLWWYYFSKLIEFMDTFFFILRKNNHQITVLHVYHHASMLNIWWFVMNWVPCGHSYFGATLNSFIHVLMYSYYGLSSVPSMRPYLWWKKYITQGQLLQFVLTIIQTSCGVIWPCTFPLGWLYFQIGYMISLIALFTNFYIQTYNKKGASRRKDHLKDHQNGSMAAVNGHTNSFSPLENNVKPRKLRKD</sequence>
<proteinExistence type="evidence at protein level"/>
<name>ELOV5_HUMAN</name>